<keyword id="KW-0285">Flavoprotein</keyword>
<keyword id="KW-0288">FMN</keyword>
<keyword id="KW-0520">NAD</keyword>
<keyword id="KW-0521">NADP</keyword>
<keyword id="KW-0547">Nucleotide-binding</keyword>
<keyword id="KW-0560">Oxidoreductase</keyword>
<keyword id="KW-1185">Reference proteome</keyword>
<comment type="catalytic activity">
    <reaction evidence="1">
        <text>a quinone + NADH + H(+) = a quinol + NAD(+)</text>
        <dbReference type="Rhea" id="RHEA:46160"/>
        <dbReference type="ChEBI" id="CHEBI:15378"/>
        <dbReference type="ChEBI" id="CHEBI:24646"/>
        <dbReference type="ChEBI" id="CHEBI:57540"/>
        <dbReference type="ChEBI" id="CHEBI:57945"/>
        <dbReference type="ChEBI" id="CHEBI:132124"/>
        <dbReference type="EC" id="1.6.5.2"/>
    </reaction>
</comment>
<comment type="catalytic activity">
    <reaction evidence="1">
        <text>a quinone + NADPH + H(+) = a quinol + NADP(+)</text>
        <dbReference type="Rhea" id="RHEA:46164"/>
        <dbReference type="ChEBI" id="CHEBI:15378"/>
        <dbReference type="ChEBI" id="CHEBI:24646"/>
        <dbReference type="ChEBI" id="CHEBI:57783"/>
        <dbReference type="ChEBI" id="CHEBI:58349"/>
        <dbReference type="ChEBI" id="CHEBI:132124"/>
        <dbReference type="EC" id="1.6.5.2"/>
    </reaction>
</comment>
<comment type="cofactor">
    <cofactor evidence="1">
        <name>FMN</name>
        <dbReference type="ChEBI" id="CHEBI:58210"/>
    </cofactor>
    <text evidence="1">Binds 1 FMN per monomer.</text>
</comment>
<comment type="similarity">
    <text evidence="1">Belongs to the WrbA family.</text>
</comment>
<gene>
    <name type="ordered locus">OCAR_5077</name>
    <name type="ordered locus">OCA5_c28860</name>
</gene>
<feature type="chain" id="PRO_1000200637" description="NAD(P)H dehydrogenase (quinone)">
    <location>
        <begin position="1"/>
        <end position="199"/>
    </location>
</feature>
<feature type="domain" description="Flavodoxin-like" evidence="1">
    <location>
        <begin position="4"/>
        <end position="190"/>
    </location>
</feature>
<feature type="binding site" evidence="1">
    <location>
        <begin position="10"/>
        <end position="15"/>
    </location>
    <ligand>
        <name>FMN</name>
        <dbReference type="ChEBI" id="CHEBI:58210"/>
    </ligand>
</feature>
<feature type="binding site" evidence="1">
    <location>
        <position position="12"/>
    </location>
    <ligand>
        <name>NAD(+)</name>
        <dbReference type="ChEBI" id="CHEBI:57540"/>
    </ligand>
</feature>
<feature type="binding site" evidence="1">
    <location>
        <begin position="78"/>
        <end position="80"/>
    </location>
    <ligand>
        <name>FMN</name>
        <dbReference type="ChEBI" id="CHEBI:58210"/>
    </ligand>
</feature>
<feature type="binding site" evidence="1">
    <location>
        <position position="98"/>
    </location>
    <ligand>
        <name>substrate</name>
    </ligand>
</feature>
<feature type="binding site" evidence="1">
    <location>
        <begin position="113"/>
        <end position="119"/>
    </location>
    <ligand>
        <name>FMN</name>
        <dbReference type="ChEBI" id="CHEBI:58210"/>
    </ligand>
</feature>
<feature type="binding site" evidence="1">
    <location>
        <position position="134"/>
    </location>
    <ligand>
        <name>FMN</name>
        <dbReference type="ChEBI" id="CHEBI:58210"/>
    </ligand>
</feature>
<dbReference type="EC" id="1.6.5.2" evidence="1"/>
<dbReference type="EMBL" id="CP001196">
    <property type="protein sequence ID" value="ACI92212.1"/>
    <property type="molecule type" value="Genomic_DNA"/>
</dbReference>
<dbReference type="EMBL" id="CP002826">
    <property type="protein sequence ID" value="AEI07577.1"/>
    <property type="molecule type" value="Genomic_DNA"/>
</dbReference>
<dbReference type="SMR" id="B6JBZ6"/>
<dbReference type="STRING" id="504832.OCA5_c28860"/>
<dbReference type="KEGG" id="oca:OCAR_5077"/>
<dbReference type="KEGG" id="ocg:OCA5_c28860"/>
<dbReference type="PATRIC" id="fig|504832.7.peg.3045"/>
<dbReference type="eggNOG" id="COG0655">
    <property type="taxonomic scope" value="Bacteria"/>
</dbReference>
<dbReference type="HOGENOM" id="CLU_051402_0_2_5"/>
<dbReference type="OrthoDB" id="9801479at2"/>
<dbReference type="Proteomes" id="UP000007730">
    <property type="component" value="Chromosome"/>
</dbReference>
<dbReference type="GO" id="GO:0016020">
    <property type="term" value="C:membrane"/>
    <property type="evidence" value="ECO:0007669"/>
    <property type="project" value="TreeGrafter"/>
</dbReference>
<dbReference type="GO" id="GO:0050660">
    <property type="term" value="F:flavin adenine dinucleotide binding"/>
    <property type="evidence" value="ECO:0007669"/>
    <property type="project" value="UniProtKB-UniRule"/>
</dbReference>
<dbReference type="GO" id="GO:0010181">
    <property type="term" value="F:FMN binding"/>
    <property type="evidence" value="ECO:0007669"/>
    <property type="project" value="InterPro"/>
</dbReference>
<dbReference type="GO" id="GO:0051287">
    <property type="term" value="F:NAD binding"/>
    <property type="evidence" value="ECO:0007669"/>
    <property type="project" value="UniProtKB-UniRule"/>
</dbReference>
<dbReference type="GO" id="GO:0050136">
    <property type="term" value="F:NADH:ubiquinone reductase (non-electrogenic) activity"/>
    <property type="evidence" value="ECO:0007669"/>
    <property type="project" value="RHEA"/>
</dbReference>
<dbReference type="GO" id="GO:0050661">
    <property type="term" value="F:NADP binding"/>
    <property type="evidence" value="ECO:0007669"/>
    <property type="project" value="UniProtKB-UniRule"/>
</dbReference>
<dbReference type="GO" id="GO:0008753">
    <property type="term" value="F:NADPH dehydrogenase (quinone) activity"/>
    <property type="evidence" value="ECO:0007669"/>
    <property type="project" value="RHEA"/>
</dbReference>
<dbReference type="FunFam" id="3.40.50.360:FF:000001">
    <property type="entry name" value="NAD(P)H dehydrogenase (Quinone) FQR1-like"/>
    <property type="match status" value="1"/>
</dbReference>
<dbReference type="Gene3D" id="3.40.50.360">
    <property type="match status" value="1"/>
</dbReference>
<dbReference type="HAMAP" id="MF_01017">
    <property type="entry name" value="NQOR"/>
    <property type="match status" value="1"/>
</dbReference>
<dbReference type="InterPro" id="IPR008254">
    <property type="entry name" value="Flavodoxin/NO_synth"/>
</dbReference>
<dbReference type="InterPro" id="IPR029039">
    <property type="entry name" value="Flavoprotein-like_sf"/>
</dbReference>
<dbReference type="InterPro" id="IPR010089">
    <property type="entry name" value="Flavoprotein_WrbA-like"/>
</dbReference>
<dbReference type="InterPro" id="IPR005025">
    <property type="entry name" value="FMN_Rdtase-like_dom"/>
</dbReference>
<dbReference type="InterPro" id="IPR037513">
    <property type="entry name" value="NQO"/>
</dbReference>
<dbReference type="NCBIfam" id="TIGR01755">
    <property type="entry name" value="flav_wrbA"/>
    <property type="match status" value="1"/>
</dbReference>
<dbReference type="NCBIfam" id="NF002999">
    <property type="entry name" value="PRK03767.1"/>
    <property type="match status" value="1"/>
</dbReference>
<dbReference type="PANTHER" id="PTHR30546">
    <property type="entry name" value="FLAVODOXIN-RELATED PROTEIN WRBA-RELATED"/>
    <property type="match status" value="1"/>
</dbReference>
<dbReference type="PANTHER" id="PTHR30546:SF23">
    <property type="entry name" value="FLAVOPROTEIN-LIKE PROTEIN YCP4-RELATED"/>
    <property type="match status" value="1"/>
</dbReference>
<dbReference type="Pfam" id="PF03358">
    <property type="entry name" value="FMN_red"/>
    <property type="match status" value="1"/>
</dbReference>
<dbReference type="SUPFAM" id="SSF52218">
    <property type="entry name" value="Flavoproteins"/>
    <property type="match status" value="1"/>
</dbReference>
<dbReference type="PROSITE" id="PS50902">
    <property type="entry name" value="FLAVODOXIN_LIKE"/>
    <property type="match status" value="1"/>
</dbReference>
<sequence>MTKVLVLYYSAYGHIEAMANAVAEGAREAGASVDIKRVPELVPAEVAKAAHFKLDQAAPVAKVEDLANYDAIIVGTGTRFGRMSSQMANFLDQAGGLWAKGALHGKVGGAFTSTATQHGGQEMTLFSIITNLLHFGMVVVGLNYGFAGQMGVKEVTGGAPYGATTITDGDGSRLPSENELNGARYQGRTIAETAKKLHG</sequence>
<evidence type="ECO:0000255" key="1">
    <source>
        <dbReference type="HAMAP-Rule" id="MF_01017"/>
    </source>
</evidence>
<name>NQOR_AFIC5</name>
<reference key="1">
    <citation type="journal article" date="2008" name="J. Bacteriol.">
        <title>Genome sequence of the chemolithoautotrophic bacterium Oligotropha carboxidovorans OM5T.</title>
        <authorList>
            <person name="Paul D."/>
            <person name="Bridges S."/>
            <person name="Burgess S.C."/>
            <person name="Dandass Y."/>
            <person name="Lawrence M.L."/>
        </authorList>
    </citation>
    <scope>NUCLEOTIDE SEQUENCE [LARGE SCALE GENOMIC DNA]</scope>
    <source>
        <strain>ATCC 49405 / DSM 1227 / KCTC 32145 / OM5</strain>
    </source>
</reference>
<reference key="2">
    <citation type="journal article" date="2011" name="J. Bacteriol.">
        <title>Complete genome sequences of the chemolithoautotrophic Oligotropha carboxidovorans strains OM4 and OM5.</title>
        <authorList>
            <person name="Volland S."/>
            <person name="Rachinger M."/>
            <person name="Strittmatter A."/>
            <person name="Daniel R."/>
            <person name="Gottschalk G."/>
            <person name="Meyer O."/>
        </authorList>
    </citation>
    <scope>NUCLEOTIDE SEQUENCE [LARGE SCALE GENOMIC DNA]</scope>
    <source>
        <strain>ATCC 49405 / DSM 1227 / KCTC 32145 / OM5</strain>
    </source>
</reference>
<proteinExistence type="inferred from homology"/>
<protein>
    <recommendedName>
        <fullName evidence="1">NAD(P)H dehydrogenase (quinone)</fullName>
        <ecNumber evidence="1">1.6.5.2</ecNumber>
    </recommendedName>
    <alternativeName>
        <fullName>Flavoprotein WrbA</fullName>
    </alternativeName>
    <alternativeName>
        <fullName evidence="1">NAD(P)H:quinone oxidoreductase</fullName>
        <shortName evidence="1">NQO</shortName>
    </alternativeName>
</protein>
<organism>
    <name type="scientific">Afipia carboxidovorans (strain ATCC 49405 / DSM 1227 / KCTC 32145 / OM5)</name>
    <name type="common">Oligotropha carboxidovorans</name>
    <dbReference type="NCBI Taxonomy" id="504832"/>
    <lineage>
        <taxon>Bacteria</taxon>
        <taxon>Pseudomonadati</taxon>
        <taxon>Pseudomonadota</taxon>
        <taxon>Alphaproteobacteria</taxon>
        <taxon>Hyphomicrobiales</taxon>
        <taxon>Nitrobacteraceae</taxon>
        <taxon>Afipia</taxon>
    </lineage>
</organism>
<accession>B6JBZ6</accession>
<accession>F8BXA0</accession>